<reference key="1">
    <citation type="submission" date="2007-12" db="EMBL/GenBank/DDBJ databases">
        <title>Complete sequence of Methylobacterium extorquens PA1.</title>
        <authorList>
            <consortium name="US DOE Joint Genome Institute"/>
            <person name="Copeland A."/>
            <person name="Lucas S."/>
            <person name="Lapidus A."/>
            <person name="Barry K."/>
            <person name="Glavina del Rio T."/>
            <person name="Dalin E."/>
            <person name="Tice H."/>
            <person name="Pitluck S."/>
            <person name="Saunders E."/>
            <person name="Brettin T."/>
            <person name="Bruce D."/>
            <person name="Detter J.C."/>
            <person name="Han C."/>
            <person name="Schmutz J."/>
            <person name="Larimer F."/>
            <person name="Land M."/>
            <person name="Hauser L."/>
            <person name="Kyrpides N."/>
            <person name="Kim E."/>
            <person name="Marx C."/>
            <person name="Richardson P."/>
        </authorList>
    </citation>
    <scope>NUCLEOTIDE SEQUENCE [LARGE SCALE GENOMIC DNA]</scope>
    <source>
        <strain>PA1</strain>
    </source>
</reference>
<evidence type="ECO:0000255" key="1">
    <source>
        <dbReference type="HAMAP-Rule" id="MF_01007"/>
    </source>
</evidence>
<evidence type="ECO:0000256" key="2">
    <source>
        <dbReference type="SAM" id="MobiDB-lite"/>
    </source>
</evidence>
<comment type="function">
    <text evidence="1">Specifically methylates the N4 position of cytidine in position 1402 (C1402) of 16S rRNA.</text>
</comment>
<comment type="catalytic activity">
    <reaction evidence="1">
        <text>cytidine(1402) in 16S rRNA + S-adenosyl-L-methionine = N(4)-methylcytidine(1402) in 16S rRNA + S-adenosyl-L-homocysteine + H(+)</text>
        <dbReference type="Rhea" id="RHEA:42928"/>
        <dbReference type="Rhea" id="RHEA-COMP:10286"/>
        <dbReference type="Rhea" id="RHEA-COMP:10287"/>
        <dbReference type="ChEBI" id="CHEBI:15378"/>
        <dbReference type="ChEBI" id="CHEBI:57856"/>
        <dbReference type="ChEBI" id="CHEBI:59789"/>
        <dbReference type="ChEBI" id="CHEBI:74506"/>
        <dbReference type="ChEBI" id="CHEBI:82748"/>
        <dbReference type="EC" id="2.1.1.199"/>
    </reaction>
</comment>
<comment type="subcellular location">
    <subcellularLocation>
        <location evidence="1">Cytoplasm</location>
    </subcellularLocation>
</comment>
<comment type="similarity">
    <text evidence="1">Belongs to the methyltransferase superfamily. RsmH family.</text>
</comment>
<protein>
    <recommendedName>
        <fullName evidence="1">Ribosomal RNA small subunit methyltransferase H</fullName>
        <ecNumber evidence="1">2.1.1.199</ecNumber>
    </recommendedName>
    <alternativeName>
        <fullName evidence="1">16S rRNA m(4)C1402 methyltransferase</fullName>
    </alternativeName>
    <alternativeName>
        <fullName evidence="1">rRNA (cytosine-N(4)-)-methyltransferase RsmH</fullName>
    </alternativeName>
</protein>
<organism>
    <name type="scientific">Methylorubrum extorquens (strain PA1)</name>
    <name type="common">Methylobacterium extorquens</name>
    <dbReference type="NCBI Taxonomy" id="419610"/>
    <lineage>
        <taxon>Bacteria</taxon>
        <taxon>Pseudomonadati</taxon>
        <taxon>Pseudomonadota</taxon>
        <taxon>Alphaproteobacteria</taxon>
        <taxon>Hyphomicrobiales</taxon>
        <taxon>Methylobacteriaceae</taxon>
        <taxon>Methylorubrum</taxon>
    </lineage>
</organism>
<name>RSMH_METEP</name>
<dbReference type="EC" id="2.1.1.199" evidence="1"/>
<dbReference type="EMBL" id="CP000908">
    <property type="protein sequence ID" value="ABY33009.1"/>
    <property type="molecule type" value="Genomic_DNA"/>
</dbReference>
<dbReference type="RefSeq" id="WP_012255699.1">
    <property type="nucleotide sequence ID" value="NC_010172.1"/>
</dbReference>
<dbReference type="SMR" id="A9VW37"/>
<dbReference type="KEGG" id="mex:Mext_4641"/>
<dbReference type="eggNOG" id="COG0275">
    <property type="taxonomic scope" value="Bacteria"/>
</dbReference>
<dbReference type="HOGENOM" id="CLU_038422_1_1_5"/>
<dbReference type="BioCyc" id="MEXT419610:MEXT_RS23315-MONOMER"/>
<dbReference type="GO" id="GO:0005737">
    <property type="term" value="C:cytoplasm"/>
    <property type="evidence" value="ECO:0007669"/>
    <property type="project" value="UniProtKB-SubCell"/>
</dbReference>
<dbReference type="GO" id="GO:0071424">
    <property type="term" value="F:rRNA (cytosine-N4-)-methyltransferase activity"/>
    <property type="evidence" value="ECO:0007669"/>
    <property type="project" value="UniProtKB-UniRule"/>
</dbReference>
<dbReference type="GO" id="GO:0070475">
    <property type="term" value="P:rRNA base methylation"/>
    <property type="evidence" value="ECO:0007669"/>
    <property type="project" value="UniProtKB-UniRule"/>
</dbReference>
<dbReference type="Gene3D" id="1.10.150.170">
    <property type="entry name" value="Putative methyltransferase TM0872, insert domain"/>
    <property type="match status" value="1"/>
</dbReference>
<dbReference type="Gene3D" id="3.40.50.150">
    <property type="entry name" value="Vaccinia Virus protein VP39"/>
    <property type="match status" value="1"/>
</dbReference>
<dbReference type="HAMAP" id="MF_01007">
    <property type="entry name" value="16SrRNA_methyltr_H"/>
    <property type="match status" value="1"/>
</dbReference>
<dbReference type="InterPro" id="IPR002903">
    <property type="entry name" value="RsmH"/>
</dbReference>
<dbReference type="InterPro" id="IPR023397">
    <property type="entry name" value="SAM-dep_MeTrfase_MraW_recog"/>
</dbReference>
<dbReference type="InterPro" id="IPR029063">
    <property type="entry name" value="SAM-dependent_MTases_sf"/>
</dbReference>
<dbReference type="NCBIfam" id="TIGR00006">
    <property type="entry name" value="16S rRNA (cytosine(1402)-N(4))-methyltransferase RsmH"/>
    <property type="match status" value="1"/>
</dbReference>
<dbReference type="PANTHER" id="PTHR11265:SF0">
    <property type="entry name" value="12S RRNA N4-METHYLCYTIDINE METHYLTRANSFERASE"/>
    <property type="match status" value="1"/>
</dbReference>
<dbReference type="PANTHER" id="PTHR11265">
    <property type="entry name" value="S-ADENOSYL-METHYLTRANSFERASE MRAW"/>
    <property type="match status" value="1"/>
</dbReference>
<dbReference type="Pfam" id="PF01795">
    <property type="entry name" value="Methyltransf_5"/>
    <property type="match status" value="1"/>
</dbReference>
<dbReference type="PIRSF" id="PIRSF004486">
    <property type="entry name" value="MraW"/>
    <property type="match status" value="1"/>
</dbReference>
<dbReference type="SUPFAM" id="SSF81799">
    <property type="entry name" value="Putative methyltransferase TM0872, insert domain"/>
    <property type="match status" value="1"/>
</dbReference>
<dbReference type="SUPFAM" id="SSF53335">
    <property type="entry name" value="S-adenosyl-L-methionine-dependent methyltransferases"/>
    <property type="match status" value="1"/>
</dbReference>
<sequence length="351" mass="37414">MSRAPRTARAELPKGAQARHVPVLLAEVLAALSLDRPGLAVDGTFGAGGYTRALLEAGPEVRVIAIDRDPTAIRGGADLVTASGGRLRLVQGRFGDLDTLIADQDEPQADWVVLDIGVSSMQIDEAQRGFSFRQDGPLDMRMGGEGPSAADLVNGEEETTLADILYHFGEERRSRAVARAIVEARRRAPIETTAQLADLVAGVVRPEPGSPIHPATRSFQGLRIAVNDELGELVRGLHAAERVLKPGGRLAVVTFHSLEDRIVKQFFSARSGRAAQASRHVPGVERPAPKSFKLVTKGPVLPSEAETDVNPRSRSAKLRAGERTDAPAPPPLSAIETLASLPAPQGRGPRR</sequence>
<feature type="chain" id="PRO_0000386975" description="Ribosomal RNA small subunit methyltransferase H">
    <location>
        <begin position="1"/>
        <end position="351"/>
    </location>
</feature>
<feature type="region of interest" description="Disordered" evidence="2">
    <location>
        <begin position="274"/>
        <end position="351"/>
    </location>
</feature>
<feature type="binding site" evidence="1">
    <location>
        <begin position="48"/>
        <end position="50"/>
    </location>
    <ligand>
        <name>S-adenosyl-L-methionine</name>
        <dbReference type="ChEBI" id="CHEBI:59789"/>
    </ligand>
</feature>
<feature type="binding site" evidence="1">
    <location>
        <position position="67"/>
    </location>
    <ligand>
        <name>S-adenosyl-L-methionine</name>
        <dbReference type="ChEBI" id="CHEBI:59789"/>
    </ligand>
</feature>
<feature type="binding site" evidence="1">
    <location>
        <position position="94"/>
    </location>
    <ligand>
        <name>S-adenosyl-L-methionine</name>
        <dbReference type="ChEBI" id="CHEBI:59789"/>
    </ligand>
</feature>
<feature type="binding site" evidence="1">
    <location>
        <position position="115"/>
    </location>
    <ligand>
        <name>S-adenosyl-L-methionine</name>
        <dbReference type="ChEBI" id="CHEBI:59789"/>
    </ligand>
</feature>
<feature type="binding site" evidence="1">
    <location>
        <position position="122"/>
    </location>
    <ligand>
        <name>S-adenosyl-L-methionine</name>
        <dbReference type="ChEBI" id="CHEBI:59789"/>
    </ligand>
</feature>
<accession>A9VW37</accession>
<proteinExistence type="inferred from homology"/>
<gene>
    <name evidence="1" type="primary">rsmH</name>
    <name type="synonym">mraW</name>
    <name type="ordered locus">Mext_4641</name>
</gene>
<keyword id="KW-0963">Cytoplasm</keyword>
<keyword id="KW-0489">Methyltransferase</keyword>
<keyword id="KW-0698">rRNA processing</keyword>
<keyword id="KW-0949">S-adenosyl-L-methionine</keyword>
<keyword id="KW-0808">Transferase</keyword>